<evidence type="ECO:0000255" key="1">
    <source>
        <dbReference type="HAMAP-Rule" id="MF_00046"/>
    </source>
</evidence>
<accession>A6T2F7</accession>
<organism>
    <name type="scientific">Janthinobacterium sp. (strain Marseille)</name>
    <name type="common">Minibacterium massiliensis</name>
    <dbReference type="NCBI Taxonomy" id="375286"/>
    <lineage>
        <taxon>Bacteria</taxon>
        <taxon>Pseudomonadati</taxon>
        <taxon>Pseudomonadota</taxon>
        <taxon>Betaproteobacteria</taxon>
        <taxon>Burkholderiales</taxon>
        <taxon>Oxalobacteraceae</taxon>
        <taxon>Janthinobacterium</taxon>
    </lineage>
</organism>
<gene>
    <name evidence="1" type="primary">murC</name>
    <name type="ordered locus">mma_3014</name>
</gene>
<protein>
    <recommendedName>
        <fullName evidence="1">UDP-N-acetylmuramate--L-alanine ligase</fullName>
        <ecNumber evidence="1">6.3.2.8</ecNumber>
    </recommendedName>
    <alternativeName>
        <fullName evidence="1">UDP-N-acetylmuramoyl-L-alanine synthetase</fullName>
    </alternativeName>
</protein>
<sequence>MKHKVKNIHFVGIGGSGMSGIAEVLLNLGYTVSGSDLGSNAATRRLIELGAKVTLGHAAENIEKADAIVTSTAVKEDNPEVIAAREKHIPIVPRAVMLAELMRLRRGIAIAGTHGKTTTTSLVASVLAEGGLDPTFVIGGLLNSAGANAKLGTGEFIVAEADESDASFLNLSPVIEVITNIDADHMETYGHDFEKLKQAFIEFTQRLPFYGVAVLCIDDATVREIMPRISKLITTYGFHEDAQVRAIDAKAIDGHMHFTVLQEGYAPMQVSLNQPGMHNVQNACAAIAIARELGVADHATQKALTEFNGVGRRFTRYGEISLPAVNDKPAGTFALVDDYGHHPVETAATIAAARGAYPGRRLVLAFQPHRYTRTRDLFEDFVKVLSTTDMLVLAEVYAAGEQPIVAADGRTLAHALRVAGKVDPVFVEKIADMPATIMNIIKDGDVVITMGAGSISGVPAKLVQA</sequence>
<comment type="function">
    <text evidence="1">Cell wall formation.</text>
</comment>
<comment type="catalytic activity">
    <reaction evidence="1">
        <text>UDP-N-acetyl-alpha-D-muramate + L-alanine + ATP = UDP-N-acetyl-alpha-D-muramoyl-L-alanine + ADP + phosphate + H(+)</text>
        <dbReference type="Rhea" id="RHEA:23372"/>
        <dbReference type="ChEBI" id="CHEBI:15378"/>
        <dbReference type="ChEBI" id="CHEBI:30616"/>
        <dbReference type="ChEBI" id="CHEBI:43474"/>
        <dbReference type="ChEBI" id="CHEBI:57972"/>
        <dbReference type="ChEBI" id="CHEBI:70757"/>
        <dbReference type="ChEBI" id="CHEBI:83898"/>
        <dbReference type="ChEBI" id="CHEBI:456216"/>
        <dbReference type="EC" id="6.3.2.8"/>
    </reaction>
</comment>
<comment type="pathway">
    <text evidence="1">Cell wall biogenesis; peptidoglycan biosynthesis.</text>
</comment>
<comment type="subcellular location">
    <subcellularLocation>
        <location evidence="1">Cytoplasm</location>
    </subcellularLocation>
</comment>
<comment type="similarity">
    <text evidence="1">Belongs to the MurCDEF family.</text>
</comment>
<keyword id="KW-0067">ATP-binding</keyword>
<keyword id="KW-0131">Cell cycle</keyword>
<keyword id="KW-0132">Cell division</keyword>
<keyword id="KW-0133">Cell shape</keyword>
<keyword id="KW-0961">Cell wall biogenesis/degradation</keyword>
<keyword id="KW-0963">Cytoplasm</keyword>
<keyword id="KW-0436">Ligase</keyword>
<keyword id="KW-0547">Nucleotide-binding</keyword>
<keyword id="KW-0573">Peptidoglycan synthesis</keyword>
<reference key="1">
    <citation type="journal article" date="2007" name="PLoS Genet.">
        <title>Genome analysis of Minibacterium massiliensis highlights the convergent evolution of water-living bacteria.</title>
        <authorList>
            <person name="Audic S."/>
            <person name="Robert C."/>
            <person name="Campagna B."/>
            <person name="Parinello H."/>
            <person name="Claverie J.-M."/>
            <person name="Raoult D."/>
            <person name="Drancourt M."/>
        </authorList>
    </citation>
    <scope>NUCLEOTIDE SEQUENCE [LARGE SCALE GENOMIC DNA]</scope>
    <source>
        <strain>Marseille</strain>
    </source>
</reference>
<feature type="chain" id="PRO_1000004353" description="UDP-N-acetylmuramate--L-alanine ligase">
    <location>
        <begin position="1"/>
        <end position="465"/>
    </location>
</feature>
<feature type="binding site" evidence="1">
    <location>
        <begin position="112"/>
        <end position="118"/>
    </location>
    <ligand>
        <name>ATP</name>
        <dbReference type="ChEBI" id="CHEBI:30616"/>
    </ligand>
</feature>
<name>MURC_JANMA</name>
<proteinExistence type="inferred from homology"/>
<dbReference type="EC" id="6.3.2.8" evidence="1"/>
<dbReference type="EMBL" id="CP000269">
    <property type="protein sequence ID" value="ABR88673.1"/>
    <property type="molecule type" value="Genomic_DNA"/>
</dbReference>
<dbReference type="RefSeq" id="WP_012080863.1">
    <property type="nucleotide sequence ID" value="NC_009659.1"/>
</dbReference>
<dbReference type="SMR" id="A6T2F7"/>
<dbReference type="STRING" id="375286.mma_3014"/>
<dbReference type="KEGG" id="mms:mma_3014"/>
<dbReference type="eggNOG" id="COG0773">
    <property type="taxonomic scope" value="Bacteria"/>
</dbReference>
<dbReference type="HOGENOM" id="CLU_028104_2_2_4"/>
<dbReference type="OrthoDB" id="9804126at2"/>
<dbReference type="UniPathway" id="UPA00219"/>
<dbReference type="Proteomes" id="UP000006388">
    <property type="component" value="Chromosome"/>
</dbReference>
<dbReference type="GO" id="GO:0005737">
    <property type="term" value="C:cytoplasm"/>
    <property type="evidence" value="ECO:0007669"/>
    <property type="project" value="UniProtKB-SubCell"/>
</dbReference>
<dbReference type="GO" id="GO:0005524">
    <property type="term" value="F:ATP binding"/>
    <property type="evidence" value="ECO:0007669"/>
    <property type="project" value="UniProtKB-UniRule"/>
</dbReference>
<dbReference type="GO" id="GO:0008763">
    <property type="term" value="F:UDP-N-acetylmuramate-L-alanine ligase activity"/>
    <property type="evidence" value="ECO:0007669"/>
    <property type="project" value="UniProtKB-UniRule"/>
</dbReference>
<dbReference type="GO" id="GO:0051301">
    <property type="term" value="P:cell division"/>
    <property type="evidence" value="ECO:0007669"/>
    <property type="project" value="UniProtKB-KW"/>
</dbReference>
<dbReference type="GO" id="GO:0071555">
    <property type="term" value="P:cell wall organization"/>
    <property type="evidence" value="ECO:0007669"/>
    <property type="project" value="UniProtKB-KW"/>
</dbReference>
<dbReference type="GO" id="GO:0009252">
    <property type="term" value="P:peptidoglycan biosynthetic process"/>
    <property type="evidence" value="ECO:0007669"/>
    <property type="project" value="UniProtKB-UniRule"/>
</dbReference>
<dbReference type="GO" id="GO:0008360">
    <property type="term" value="P:regulation of cell shape"/>
    <property type="evidence" value="ECO:0007669"/>
    <property type="project" value="UniProtKB-KW"/>
</dbReference>
<dbReference type="FunFam" id="3.40.1190.10:FF:000001">
    <property type="entry name" value="UDP-N-acetylmuramate--L-alanine ligase"/>
    <property type="match status" value="1"/>
</dbReference>
<dbReference type="Gene3D" id="3.90.190.20">
    <property type="entry name" value="Mur ligase, C-terminal domain"/>
    <property type="match status" value="1"/>
</dbReference>
<dbReference type="Gene3D" id="3.40.1190.10">
    <property type="entry name" value="Mur-like, catalytic domain"/>
    <property type="match status" value="1"/>
</dbReference>
<dbReference type="Gene3D" id="3.40.50.720">
    <property type="entry name" value="NAD(P)-binding Rossmann-like Domain"/>
    <property type="match status" value="1"/>
</dbReference>
<dbReference type="HAMAP" id="MF_00046">
    <property type="entry name" value="MurC"/>
    <property type="match status" value="1"/>
</dbReference>
<dbReference type="InterPro" id="IPR036565">
    <property type="entry name" value="Mur-like_cat_sf"/>
</dbReference>
<dbReference type="InterPro" id="IPR004101">
    <property type="entry name" value="Mur_ligase_C"/>
</dbReference>
<dbReference type="InterPro" id="IPR036615">
    <property type="entry name" value="Mur_ligase_C_dom_sf"/>
</dbReference>
<dbReference type="InterPro" id="IPR013221">
    <property type="entry name" value="Mur_ligase_cen"/>
</dbReference>
<dbReference type="InterPro" id="IPR000713">
    <property type="entry name" value="Mur_ligase_N"/>
</dbReference>
<dbReference type="InterPro" id="IPR050061">
    <property type="entry name" value="MurCDEF_pg_biosynth"/>
</dbReference>
<dbReference type="InterPro" id="IPR005758">
    <property type="entry name" value="UDP-N-AcMur_Ala_ligase_MurC"/>
</dbReference>
<dbReference type="NCBIfam" id="TIGR01082">
    <property type="entry name" value="murC"/>
    <property type="match status" value="1"/>
</dbReference>
<dbReference type="PANTHER" id="PTHR43445:SF3">
    <property type="entry name" value="UDP-N-ACETYLMURAMATE--L-ALANINE LIGASE"/>
    <property type="match status" value="1"/>
</dbReference>
<dbReference type="PANTHER" id="PTHR43445">
    <property type="entry name" value="UDP-N-ACETYLMURAMATE--L-ALANINE LIGASE-RELATED"/>
    <property type="match status" value="1"/>
</dbReference>
<dbReference type="Pfam" id="PF01225">
    <property type="entry name" value="Mur_ligase"/>
    <property type="match status" value="1"/>
</dbReference>
<dbReference type="Pfam" id="PF02875">
    <property type="entry name" value="Mur_ligase_C"/>
    <property type="match status" value="1"/>
</dbReference>
<dbReference type="Pfam" id="PF08245">
    <property type="entry name" value="Mur_ligase_M"/>
    <property type="match status" value="1"/>
</dbReference>
<dbReference type="SUPFAM" id="SSF51984">
    <property type="entry name" value="MurCD N-terminal domain"/>
    <property type="match status" value="1"/>
</dbReference>
<dbReference type="SUPFAM" id="SSF53623">
    <property type="entry name" value="MurD-like peptide ligases, catalytic domain"/>
    <property type="match status" value="1"/>
</dbReference>
<dbReference type="SUPFAM" id="SSF53244">
    <property type="entry name" value="MurD-like peptide ligases, peptide-binding domain"/>
    <property type="match status" value="1"/>
</dbReference>